<comment type="function">
    <text evidence="6 10 12 13 14 22">Abundant protein component of royal jelly, a substance produced in the hypopharyngeal gland containing proteins, free amino acids, fatty acids, sugars and other nutrients, which is fed to developing larvae by worker nurse bees (PubMed:15607658, PubMed:31410279). Major royal jelly proteins (MRJPs) are high in essential amino acids and probably have a nutritional function in larval food (PubMed:9791542). All larvae are fed some royal jelly (also known as worker jelly) early in their development but it forms the principal source of nutrition for larvae destined to become queen bees (Probable). Secreted RNA-binding protein required to concentrate, stabilize and enhance environmental RNA bioavailability in the honey bee royal jelly (PubMed:31051140). Acts as a RNA-aggregating protein: binds 18 nucleotides and longer single- and double-stranded RNA (ssRNA and dsRNA, respectively) in a non-specific manner (PubMed:31051140). RNA-binding drives super-order assembly of oligomers into extracellular ribonucleoprotein granules that concentrate, protect and enhance RNA uptake granules, facilitating RNA transfer among bees (PubMed:31051140). Produced in the spermatheca of adult queen bees, along with other major royal jelly proteins, where it may act as a nutrient supply for sperm stored by mated queens, or be involved in energy metabolism (PubMed:34442256).</text>
</comment>
<comment type="biophysicochemical properties">
    <phDependence>
        <text evidence="11">Optimum pH for protein stability is 4.5. Protein becomes unstable at pH above 10.0.</text>
    </phDependence>
</comment>
<comment type="subunit">
    <text evidence="10">Homoligomer; in the absence of RNA, assembles into a higher-order oligomeric form, composed of around 20 monomer units.</text>
</comment>
<comment type="subcellular location">
    <subcellularLocation>
        <location evidence="4 6 7 12 14">Secreted</location>
    </subcellularLocation>
    <text evidence="4 6 7 12">Incorporated into royal jelly.</text>
</comment>
<comment type="tissue specificity">
    <text evidence="6 8 12 13 14 15">Found in and secreted from the hypopharyngeal glands of the worker honey bee (at protein level); expression peaks at 12 days post eclosion (PubMed:15607658, PubMed:31410279, PubMed:9791542). Expressed in the brains of worker bees (PubMed:17065613). Expressed in the brains of adult worker bees peaking at 12 days post eclosion (at protein level) (PubMed:31410279). Expressed in the spermatheca of adult queen bees (at protein level); Expression levels are higher in mated queens than in virgin queens (PubMed:34442256). Expressed in queen bee ovaries and male drone testes (PubMed:17065613). Expression in the head of forager worker bees is lower than in the heads of nurse worker bees (Ref.9).</text>
</comment>
<comment type="developmental stage">
    <text evidence="8 14">Produced by the cephalic glandular system of the nurse honey bee (PubMed:9791542). Expressed at low level in larval and pupal male drone bees (PubMed:17065613).</text>
</comment>
<comment type="induction">
    <text evidence="9">Significantly down-regulated by the ecdysteroid 20-hydroxyecdysone (ecdysterone or 20E).</text>
</comment>
<comment type="domain">
    <text evidence="3 23">The region of XQNXX pentapeptide repeats is highly polymorphic differing in the number of repeats present (PubMed:10380654). This region is high in nitrogen-rich amino acids and may function as a nutritional store of biologically available nitrogen (Probable).</text>
</comment>
<comment type="similarity">
    <text evidence="22">Belongs to the major royal jelly protein family.</text>
</comment>
<proteinExistence type="evidence at protein level"/>
<dbReference type="EMBL" id="Z26318">
    <property type="protein sequence ID" value="CAA81227.1"/>
    <property type="molecule type" value="mRNA"/>
</dbReference>
<dbReference type="EMBL" id="GU434675">
    <property type="protein sequence ID" value="ADC55524.1"/>
    <property type="molecule type" value="mRNA"/>
</dbReference>
<dbReference type="PIR" id="S39193">
    <property type="entry name" value="S39193"/>
</dbReference>
<dbReference type="RefSeq" id="NP_001011601.1">
    <property type="nucleotide sequence ID" value="NM_001011601.1"/>
</dbReference>
<dbReference type="SMR" id="Q17060"/>
<dbReference type="STRING" id="7460.Q17060"/>
<dbReference type="GlyCosmos" id="Q17060">
    <property type="glycosylation" value="1 site, No reported glycans"/>
</dbReference>
<dbReference type="PaxDb" id="7460-GB55204-PA"/>
<dbReference type="EnsemblMetazoa" id="NM_001011601">
    <property type="protein sequence ID" value="NP_001011601"/>
    <property type="gene ID" value="GeneID_406121"/>
</dbReference>
<dbReference type="GeneID" id="406121"/>
<dbReference type="KEGG" id="ame:406121"/>
<dbReference type="CTD" id="406121"/>
<dbReference type="eggNOG" id="ENOG502SCJK">
    <property type="taxonomic scope" value="Eukaryota"/>
</dbReference>
<dbReference type="HOGENOM" id="CLU_031076_2_1_1"/>
<dbReference type="InParanoid" id="Q17060"/>
<dbReference type="OrthoDB" id="8184345at2759"/>
<dbReference type="PhylomeDB" id="Q17060"/>
<dbReference type="Proteomes" id="UP000005203">
    <property type="component" value="Linkage group LG11"/>
</dbReference>
<dbReference type="GO" id="GO:0005576">
    <property type="term" value="C:extracellular region"/>
    <property type="evidence" value="ECO:0007669"/>
    <property type="project" value="UniProtKB-KW"/>
</dbReference>
<dbReference type="GO" id="GO:0003725">
    <property type="term" value="F:double-stranded RNA binding"/>
    <property type="evidence" value="ECO:0000314"/>
    <property type="project" value="UniProtKB"/>
</dbReference>
<dbReference type="GO" id="GO:0003727">
    <property type="term" value="F:single-stranded RNA binding"/>
    <property type="evidence" value="ECO:0000314"/>
    <property type="project" value="UniProtKB"/>
</dbReference>
<dbReference type="FunFam" id="2.120.10.30:FF:000177">
    <property type="entry name" value="Major royal jelly protein 3"/>
    <property type="match status" value="1"/>
</dbReference>
<dbReference type="Gene3D" id="2.120.10.30">
    <property type="entry name" value="TolB, C-terminal domain"/>
    <property type="match status" value="1"/>
</dbReference>
<dbReference type="InterPro" id="IPR011042">
    <property type="entry name" value="6-blade_b-propeller_TolB-like"/>
</dbReference>
<dbReference type="InterPro" id="IPR017996">
    <property type="entry name" value="Royal_jelly/protein_yellow"/>
</dbReference>
<dbReference type="PANTHER" id="PTHR10009:SF7">
    <property type="entry name" value="GH10609P-RELATED"/>
    <property type="match status" value="1"/>
</dbReference>
<dbReference type="PANTHER" id="PTHR10009">
    <property type="entry name" value="PROTEIN YELLOW-RELATED"/>
    <property type="match status" value="1"/>
</dbReference>
<dbReference type="Pfam" id="PF03022">
    <property type="entry name" value="MRJP"/>
    <property type="match status" value="1"/>
</dbReference>
<dbReference type="PRINTS" id="PR01366">
    <property type="entry name" value="ROYALJELLY"/>
</dbReference>
<dbReference type="SUPFAM" id="SSF63829">
    <property type="entry name" value="Calcium-dependent phosphotriesterase"/>
    <property type="match status" value="1"/>
</dbReference>
<protein>
    <recommendedName>
        <fullName evidence="19">Major royal jelly protein 3</fullName>
        <shortName evidence="19">MRJP-3</shortName>
    </recommendedName>
    <alternativeName>
        <fullName evidence="16">Apalbumin 3</fullName>
    </alternativeName>
    <alternativeName>
        <fullName evidence="18">Bee-milk protein</fullName>
    </alternativeName>
    <alternativeName>
        <fullName evidence="20 21">Royal jelly protein RJP57-1</fullName>
        <shortName evidence="22">RJP-1</shortName>
    </alternativeName>
</protein>
<evidence type="ECO:0000255" key="1"/>
<evidence type="ECO:0000256" key="2">
    <source>
        <dbReference type="SAM" id="MobiDB-lite"/>
    </source>
</evidence>
<evidence type="ECO:0000269" key="3">
    <source>
    </source>
</evidence>
<evidence type="ECO:0000269" key="4">
    <source>
    </source>
</evidence>
<evidence type="ECO:0000269" key="5">
    <source>
    </source>
</evidence>
<evidence type="ECO:0000269" key="6">
    <source>
    </source>
</evidence>
<evidence type="ECO:0000269" key="7">
    <source>
    </source>
</evidence>
<evidence type="ECO:0000269" key="8">
    <source>
    </source>
</evidence>
<evidence type="ECO:0000269" key="9">
    <source>
    </source>
</evidence>
<evidence type="ECO:0000269" key="10">
    <source>
    </source>
</evidence>
<evidence type="ECO:0000269" key="11">
    <source>
    </source>
</evidence>
<evidence type="ECO:0000269" key="12">
    <source>
    </source>
</evidence>
<evidence type="ECO:0000269" key="13">
    <source>
    </source>
</evidence>
<evidence type="ECO:0000269" key="14">
    <source>
    </source>
</evidence>
<evidence type="ECO:0000269" key="15">
    <source ref="9"/>
</evidence>
<evidence type="ECO:0000303" key="16">
    <source>
    </source>
</evidence>
<evidence type="ECO:0000303" key="17">
    <source>
    </source>
</evidence>
<evidence type="ECO:0000303" key="18">
    <source>
    </source>
</evidence>
<evidence type="ECO:0000303" key="19">
    <source>
    </source>
</evidence>
<evidence type="ECO:0000303" key="20">
    <source ref="1"/>
</evidence>
<evidence type="ECO:0000303" key="21">
    <source ref="2"/>
</evidence>
<evidence type="ECO:0000305" key="22"/>
<evidence type="ECO:0000305" key="23">
    <source>
    </source>
</evidence>
<evidence type="ECO:0000312" key="24">
    <source>
        <dbReference type="EMBL" id="ADC55524.1"/>
    </source>
</evidence>
<evidence type="ECO:0000312" key="25">
    <source>
        <dbReference type="Proteomes" id="UP000005203"/>
    </source>
</evidence>
<organism evidence="25">
    <name type="scientific">Apis mellifera</name>
    <name type="common">Honeybee</name>
    <dbReference type="NCBI Taxonomy" id="7460"/>
    <lineage>
        <taxon>Eukaryota</taxon>
        <taxon>Metazoa</taxon>
        <taxon>Ecdysozoa</taxon>
        <taxon>Arthropoda</taxon>
        <taxon>Hexapoda</taxon>
        <taxon>Insecta</taxon>
        <taxon>Pterygota</taxon>
        <taxon>Neoptera</taxon>
        <taxon>Endopterygota</taxon>
        <taxon>Hymenoptera</taxon>
        <taxon>Apocrita</taxon>
        <taxon>Aculeata</taxon>
        <taxon>Apoidea</taxon>
        <taxon>Anthophila</taxon>
        <taxon>Apidae</taxon>
        <taxon>Apis</taxon>
    </lineage>
</organism>
<gene>
    <name evidence="17 19" type="primary">Mrjp3</name>
    <name evidence="17" type="synonym">GB16459</name>
</gene>
<reference key="1">
    <citation type="journal article" date="1994" name="J. Apic. Res.">
        <title>Molecular cloning of two cDNAs from the head of the nurse honey bee (Apis mellifera L.) for coding related proteins of royal jelly.</title>
        <authorList>
            <person name="Klaudiny J."/>
            <person name="Hanes J."/>
            <person name="Kulifajova J."/>
            <person name="Albert S."/>
            <person name="Simuth J."/>
        </authorList>
        <dbReference type="AGRICOLA" id="IND20437271"/>
    </citation>
    <scope>NUCLEOTIDE SEQUENCE [MRNA]</scope>
    <source>
        <tissue>Head</tissue>
    </source>
</reference>
<reference key="2">
    <citation type="journal article" date="1996" name="J. Apic. Res.">
        <title>Newly discovered features of the updated sequence of royal jelly protein RJP571; longer repetitive region on C-terminus and homology to Drosophila melanogaster yellow protein.</title>
        <authorList>
            <person name="Albert S."/>
            <person name="Klaudiny J."/>
            <person name="Simuth J."/>
        </authorList>
        <dbReference type="AGRICOLA" id="IND20554548"/>
    </citation>
    <scope>SEQUENCE REVISION TO C-TERMINUS</scope>
</reference>
<reference key="3">
    <citation type="journal article" date="1997" name="Eur. J. Biochem.">
        <title>Change in the mode of gene expression of the hypopharyngeal gland cells with an age-dependent role change of the worker honeybee Apis mellifera L.</title>
        <authorList>
            <person name="Ohashi K."/>
            <person name="Natori S."/>
            <person name="Kubo T."/>
        </authorList>
    </citation>
    <scope>NUCLEOTIDE SEQUENCE [MRNA]</scope>
    <scope>PROTEIN SEQUENCE OF 45-59; 70-77; 106-120; 214-224 AND 243-253</scope>
    <source>
        <tissue>Hypopharyngeal gland</tissue>
    </source>
</reference>
<reference key="4">
    <citation type="journal article" date="1998" name="Cell. Mol. Life Sci.">
        <title>A family of major royal jelly proteins of the honeybee Apis mellifera L.</title>
        <authorList>
            <person name="Schmitzova J."/>
            <person name="Klaudiny J."/>
            <person name="Albert S."/>
            <person name="Schroeder W."/>
            <person name="Schreckengost W."/>
            <person name="Hanes J."/>
            <person name="Judova J."/>
            <person name="Simuth J."/>
        </authorList>
    </citation>
    <scope>NUCLEOTIDE SEQUENCE [MRNA]</scope>
    <scope>PROTEIN SEQUENCE OF 21-36</scope>
    <scope>FUNCTION</scope>
    <scope>SUBCELLULAR LOCATION</scope>
    <source>
        <tissue>Head</tissue>
    </source>
</reference>
<reference key="5">
    <citation type="journal article" date="1999" name="Insect Biochem. Mol. Biol.">
        <title>Molecular characterization of MRJP3, highly polymorphic protein of honeybee (Apis mellifera) royal jelly.</title>
        <authorList>
            <person name="Albert S."/>
            <person name="Klaudiny J."/>
            <person name="Simuth J."/>
        </authorList>
    </citation>
    <scope>NUCLEOTIDE SEQUENCE [GENOMIC DNA / MRNA]</scope>
    <scope>DOMAIN</scope>
    <scope>VARIANTS ALA-251; CYS-257; SER-274; ARG-287 AND LYS-371</scope>
</reference>
<reference key="6">
    <citation type="journal article" date="2004" name="J. Insect Physiol.">
        <title>The MRJP/YELLOW protein family of Apis mellifera: identification of new members in the EST library.</title>
        <authorList>
            <person name="Albert S."/>
            <person name="Klaudiny J."/>
        </authorList>
    </citation>
    <scope>NUCLEOTIDE SEQUENCE [MRNA]</scope>
    <scope>VARIANTS CYS-257; SER-274 AND ARG-287</scope>
</reference>
<reference evidence="24" key="7">
    <citation type="submission" date="2010-01" db="EMBL/GenBank/DDBJ databases">
        <title>Over-expression of major royal jelly protein 3 from Apis mellifera in E. coli.</title>
        <authorList>
            <person name="Yoon B.S."/>
            <person name="Nguyen V.P."/>
        </authorList>
    </citation>
    <scope>NUCLEOTIDE SEQUENCE [MRNA]</scope>
</reference>
<reference key="8">
    <citation type="journal article" date="2004" name="J. Agric. Food Chem.">
        <title>Characterization of royal jelly proteins in both Africanized and European honeybees (Apis mellifera) by two-dimensional gel electrophoresis.</title>
        <authorList>
            <person name="Sano O."/>
            <person name="Kunikata T."/>
            <person name="Kohno K."/>
            <person name="Iwaki K."/>
            <person name="Ikeda M."/>
            <person name="Kurimoto M."/>
        </authorList>
    </citation>
    <scope>PROTEIN SEQUENCE OF 21-30</scope>
    <scope>SUBCELLULAR LOCATION</scope>
</reference>
<reference key="9">
    <citation type="journal article" date="1994" name="Apidologie">
        <title>New approach to the study of division of labour in the honeybee colony (Apis mellifera L).</title>
        <authorList>
            <person name="Klaudiny J."/>
            <person name="Kulifajova J."/>
            <person name="Crailsheim K."/>
            <person name="Simuth J."/>
        </authorList>
    </citation>
    <scope>TISSUE SPECIFICITY</scope>
</reference>
<reference key="10">
    <citation type="journal article" date="2005" name="Insect Biochem. Mol. Biol.">
        <title>Profiling the proteome complement of the secretion from hypopharyngeal gland of Africanized nurse-honeybees (Apis mellifera L.).</title>
        <authorList>
            <person name="Santos K.S."/>
            <person name="dos Santos L.D."/>
            <person name="Mendes M.A."/>
            <person name="de Souza B.M."/>
            <person name="Malaspina O."/>
            <person name="Palma M.S."/>
        </authorList>
    </citation>
    <scope>FUNCTION</scope>
    <scope>SUBCELLULAR LOCATION</scope>
    <scope>TISSUE SPECIFICITY</scope>
</reference>
<reference key="11">
    <citation type="journal article" date="2005" name="Proteomics">
        <title>Towards royal jelly proteome.</title>
        <authorList>
            <person name="Scarselli R."/>
            <person name="Donadio E."/>
            <person name="Giuffrida M.G."/>
            <person name="Fortunato D."/>
            <person name="Conti A."/>
            <person name="Balestreri E."/>
            <person name="Felicioli R."/>
            <person name="Pinzauti M."/>
            <person name="Sabatini A.G."/>
            <person name="Felicioli A."/>
        </authorList>
    </citation>
    <scope>SUBCELLULAR LOCATION</scope>
</reference>
<reference key="12">
    <citation type="journal article" date="2006" name="Genome Res.">
        <title>Evolution of the Yellow/Major Royal Jelly Protein family and the emergence of social behavior in honey bees.</title>
        <authorList>
            <person name="Drapeau M.D."/>
            <person name="Albert S."/>
            <person name="Kucharski R."/>
            <person name="Prusko C."/>
            <person name="Maleszka R."/>
        </authorList>
    </citation>
    <scope>IDENTIFICATION</scope>
    <scope>TISSUE SPECIFICITY</scope>
    <scope>DEVELOPMENTAL STAGE</scope>
</reference>
<reference key="13">
    <citation type="journal article" date="2018" name="Insects">
        <title>Transcriptional Control of Honey Bee (Apis mellifera) Major Royal Jelly Proteins by 20-Hydroxyecdysone.</title>
        <authorList>
            <person name="Winkler P."/>
            <person name="Sieg F."/>
            <person name="Buttstedt A."/>
        </authorList>
    </citation>
    <scope>INDUCTION BY 20-HYDROXYECDYSONE</scope>
</reference>
<reference key="14">
    <citation type="journal article" date="2019" name="Ecol. Evol.">
        <title>The rise and fall of major royal jelly proteins during a honeybee (Apis mellifera) workers' life.</title>
        <authorList>
            <person name="Dobritzsch D."/>
            <person name="Aumer D."/>
            <person name="Fuszard M."/>
            <person name="Erler S."/>
            <person name="Buttstedt A."/>
        </authorList>
    </citation>
    <scope>FUNCTION</scope>
    <scope>SUBCELLULAR LOCATION</scope>
    <scope>TISSUE SPECIFICITY</scope>
    <scope>IDENTIFICATION BY MASS SPECTROMETRY</scope>
</reference>
<reference key="15">
    <citation type="journal article" date="2019" name="Mol. Cell">
        <title>A secreted RNA binding protein forms RNA-stabilizing granules in the honeybee royal jelly.</title>
        <authorList>
            <person name="Maori E."/>
            <person name="Navarro I.C."/>
            <person name="Boncristiani H."/>
            <person name="Seilly D.J."/>
            <person name="Rudolph K.L.M."/>
            <person name="Sapetschnig A."/>
            <person name="Lin C.C."/>
            <person name="Ladbury J.E."/>
            <person name="Evans J.D."/>
            <person name="Heeney J.L."/>
            <person name="Miska E.A."/>
        </authorList>
    </citation>
    <scope>FUNCTION</scope>
    <scope>SUBUNIT</scope>
</reference>
<reference key="16">
    <citation type="journal article" date="2019" name="Sci. Rep.">
        <title>pH-dependent stability of honey bee (Apis mellifera) major royal jelly proteins.</title>
        <authorList>
            <person name="Muresan C.I."/>
            <person name="Buttstedt A."/>
        </authorList>
    </citation>
    <scope>BIOPHYSICOCHEMICAL PROPERTIES</scope>
</reference>
<reference key="17">
    <citation type="journal article" date="2021" name="Insects">
        <title>Upregulation of Transferrin and Major Royal Jelly Proteins in the Spermathecal Fluid of Mated Honeybee (Apis mellifera) Queens.</title>
        <authorList>
            <person name="Park H.G."/>
            <person name="Kim B.Y."/>
            <person name="Kim J.M."/>
            <person name="Choi Y.S."/>
            <person name="Yoon H.J."/>
            <person name="Lee K.S."/>
            <person name="Jin B.R."/>
        </authorList>
    </citation>
    <scope>FUNCTION</scope>
    <scope>TISSUE SPECIFICITY</scope>
</reference>
<name>MRJP3_APIME</name>
<sequence>MTKWLLLVVCLGIACQDVTSAAVNHQRKSANNLAHSMKVIYEWKHIDFDFGSDERRDAAIKSGEFDHTKNYPFDVDRWRDKTFVTIERNNGVPSSLNVVTNKKGKGGPLLRPYPDWSFAKYEDCSGIVSAFKIAVDKFDRLWVLDSGLVNNNQPMCSPKLLTFDLKTSKLVKQVEIPHNIAVNATTGMGELVSLAVQAIDRTNTMVYIADEKGEGLIMYQNSDDSFHRLTSNTFDYDPRYTKLTVAGESFTVKNGIYGIALSPVTNNLYYSPLLSHGLYYVDTEQFSNPQYEENNVQYEGSQDILNTQSFGKVVSKNGVLFLGLVGNSGIACVNEHQVLQRESFDVVAQNEETLQMIVSMKIMENLPQSGRINDPEGNEYMLALSNRMQKIINNDFNFNDVNFRILGANVDDLMRNTRCGRYHNQNAGNQNADNQNADNQNANNQNADNQNANKQNGNRQNDNRQNDNKQNGNRQNDNKQNGNRQNDNKQNGNRQNGNKQNDNKQNGNRQNDNKRNGNRQNDNQNNQNDNNRNDNQVHHSSKLH</sequence>
<accession>Q17060</accession>
<accession>D3Y5T0</accession>
<keyword id="KW-0903">Direct protein sequencing</keyword>
<keyword id="KW-0325">Glycoprotein</keyword>
<keyword id="KW-1185">Reference proteome</keyword>
<keyword id="KW-0677">Repeat</keyword>
<keyword id="KW-0694">RNA-binding</keyword>
<keyword id="KW-0964">Secreted</keyword>
<keyword id="KW-0732">Signal</keyword>
<feature type="signal peptide" evidence="14">
    <location>
        <begin position="1"/>
        <end position="20"/>
    </location>
</feature>
<feature type="chain" id="PRO_0000031045" description="Major royal jelly protein 3" evidence="14">
    <location>
        <begin position="21"/>
        <end position="544"/>
    </location>
</feature>
<feature type="repeat" description="1">
    <location>
        <begin position="424"/>
        <end position="428"/>
    </location>
</feature>
<feature type="repeat" description="2">
    <location>
        <begin position="429"/>
        <end position="433"/>
    </location>
</feature>
<feature type="repeat" description="3">
    <location>
        <begin position="434"/>
        <end position="438"/>
    </location>
</feature>
<feature type="repeat" description="4">
    <location>
        <begin position="439"/>
        <end position="443"/>
    </location>
</feature>
<feature type="repeat" description="5">
    <location>
        <begin position="444"/>
        <end position="448"/>
    </location>
</feature>
<feature type="repeat" description="6">
    <location>
        <begin position="449"/>
        <end position="453"/>
    </location>
</feature>
<feature type="repeat" description="7">
    <location>
        <begin position="454"/>
        <end position="458"/>
    </location>
</feature>
<feature type="repeat" description="8">
    <location>
        <begin position="459"/>
        <end position="463"/>
    </location>
</feature>
<feature type="repeat" description="9">
    <location>
        <begin position="464"/>
        <end position="468"/>
    </location>
</feature>
<feature type="repeat" description="10">
    <location>
        <begin position="469"/>
        <end position="473"/>
    </location>
</feature>
<feature type="repeat" description="11">
    <location>
        <begin position="474"/>
        <end position="478"/>
    </location>
</feature>
<feature type="repeat" description="12">
    <location>
        <begin position="479"/>
        <end position="483"/>
    </location>
</feature>
<feature type="repeat" description="13">
    <location>
        <begin position="484"/>
        <end position="488"/>
    </location>
</feature>
<feature type="repeat" description="14">
    <location>
        <begin position="489"/>
        <end position="493"/>
    </location>
</feature>
<feature type="repeat" description="15">
    <location>
        <begin position="494"/>
        <end position="498"/>
    </location>
</feature>
<feature type="repeat" description="16">
    <location>
        <begin position="499"/>
        <end position="503"/>
    </location>
</feature>
<feature type="repeat" description="17">
    <location>
        <begin position="504"/>
        <end position="508"/>
    </location>
</feature>
<feature type="repeat" description="18">
    <location>
        <begin position="509"/>
        <end position="513"/>
    </location>
</feature>
<feature type="repeat" description="19">
    <location>
        <begin position="514"/>
        <end position="518"/>
    </location>
</feature>
<feature type="repeat" description="20">
    <location>
        <begin position="519"/>
        <end position="523"/>
    </location>
</feature>
<feature type="repeat" description="21; half-length">
    <location>
        <begin position="524"/>
        <end position="525"/>
    </location>
</feature>
<feature type="repeat" description="22">
    <location>
        <begin position="526"/>
        <end position="530"/>
    </location>
</feature>
<feature type="repeat" description="23">
    <location>
        <begin position="531"/>
        <end position="535"/>
    </location>
</feature>
<feature type="region of interest" description="Disordered" evidence="2">
    <location>
        <begin position="421"/>
        <end position="544"/>
    </location>
</feature>
<feature type="region of interest" description="23 X 5 AA tandem repeats of [NKR]-[RQ]-N-[AGD]-[DNG]" evidence="23">
    <location>
        <begin position="424"/>
        <end position="523"/>
    </location>
</feature>
<feature type="compositionally biased region" description="Low complexity" evidence="2">
    <location>
        <begin position="424"/>
        <end position="460"/>
    </location>
</feature>
<feature type="compositionally biased region" description="Low complexity" evidence="2">
    <location>
        <begin position="468"/>
        <end position="510"/>
    </location>
</feature>
<feature type="compositionally biased region" description="Low complexity" evidence="2">
    <location>
        <begin position="518"/>
        <end position="530"/>
    </location>
</feature>
<feature type="glycosylation site" description="N-linked (GlcNAc...) asparagine" evidence="1">
    <location>
        <position position="183"/>
    </location>
</feature>
<feature type="sequence variant" evidence="3">
    <original>T</original>
    <variation>A</variation>
    <location>
        <position position="251"/>
    </location>
</feature>
<feature type="sequence variant" evidence="3 5">
    <original>Y</original>
    <variation>C</variation>
    <location>
        <position position="257"/>
    </location>
</feature>
<feature type="sequence variant" evidence="3 5">
    <original>L</original>
    <variation>S</variation>
    <location>
        <position position="274"/>
    </location>
</feature>
<feature type="sequence variant" evidence="3 5">
    <original>S</original>
    <variation>R</variation>
    <location>
        <position position="287"/>
    </location>
</feature>
<feature type="sequence variant" evidence="3">
    <original>R</original>
    <variation>K</variation>
    <location>
        <position position="371"/>
    </location>
</feature>
<feature type="sequence conflict" description="In Ref. 7; ADC55524." evidence="22" ref="7">
    <original>Y</original>
    <variation>C</variation>
    <location>
        <position position="257"/>
    </location>
</feature>
<feature type="sequence conflict" description="In Ref. 7; ADC55524." evidence="22" ref="7">
    <original>L</original>
    <variation>S</variation>
    <location>
        <position position="274"/>
    </location>
</feature>
<feature type="sequence conflict" description="In Ref. 7; ADC55524." evidence="22" ref="7">
    <original>S</original>
    <variation>R</variation>
    <location>
        <position position="287"/>
    </location>
</feature>